<sequence length="199" mass="22564">MRPLRCGERTQGIPLGLLAFWVTAARCLQSQGVSLYIPQSAINATVQQDILLSVDYICHGVPTIEWKYTPNWGVQRIVEWKPGTPANVSQSHRDRVCTFDNGSIQLFNVSVKDSGYYIVTVTEHPGSSQSGTILLRVSEIRYEDLHFVAVFFALLAAVAVVLISLMWVCNQCAYKFQRKRRYKLKESTTEEIEMKEVEC</sequence>
<dbReference type="EMBL" id="BC055786">
    <property type="protein sequence ID" value="AAH55786.1"/>
    <property type="molecule type" value="mRNA"/>
</dbReference>
<dbReference type="EMBL" id="AK008621">
    <property type="protein sequence ID" value="BAB25783.1"/>
    <property type="molecule type" value="mRNA"/>
</dbReference>
<dbReference type="CCDS" id="CCDS22833.1"/>
<dbReference type="RefSeq" id="NP_081231.1">
    <property type="nucleotide sequence ID" value="NM_026955.2"/>
</dbReference>
<dbReference type="BioGRID" id="213251">
    <property type="interactions" value="1"/>
</dbReference>
<dbReference type="FunCoup" id="Q9D806">
    <property type="interactions" value="536"/>
</dbReference>
<dbReference type="STRING" id="10090.ENSMUSP00000034413"/>
<dbReference type="GlyCosmos" id="Q9D806">
    <property type="glycosylation" value="3 sites, No reported glycans"/>
</dbReference>
<dbReference type="GlyGen" id="Q9D806">
    <property type="glycosylation" value="4 sites"/>
</dbReference>
<dbReference type="iPTMnet" id="Q9D806"/>
<dbReference type="PhosphoSitePlus" id="Q9D806"/>
<dbReference type="PaxDb" id="10090-ENSMUSP00000034413"/>
<dbReference type="ProteomicsDB" id="297825"/>
<dbReference type="Antibodypedia" id="31599">
    <property type="antibodies" value="31 antibodies from 11 providers"/>
</dbReference>
<dbReference type="DNASU" id="69137"/>
<dbReference type="Ensembl" id="ENSMUST00000034413.8">
    <property type="protein sequence ID" value="ENSMUSP00000034413.7"/>
    <property type="gene ID" value="ENSMUSG00000031937.8"/>
</dbReference>
<dbReference type="GeneID" id="69137"/>
<dbReference type="KEGG" id="mmu:69137"/>
<dbReference type="UCSC" id="uc009ofk.1">
    <property type="organism name" value="mouse"/>
</dbReference>
<dbReference type="AGR" id="MGI:1916387"/>
<dbReference type="CTD" id="387804"/>
<dbReference type="MGI" id="MGI:1916387">
    <property type="gene designation" value="Vstm5"/>
</dbReference>
<dbReference type="VEuPathDB" id="HostDB:ENSMUSG00000031937"/>
<dbReference type="eggNOG" id="ENOG502S0GW">
    <property type="taxonomic scope" value="Eukaryota"/>
</dbReference>
<dbReference type="GeneTree" id="ENSGT01130000278319"/>
<dbReference type="HOGENOM" id="CLU_118644_0_0_1"/>
<dbReference type="InParanoid" id="Q9D806"/>
<dbReference type="OMA" id="KIVEWQP"/>
<dbReference type="OrthoDB" id="9933251at2759"/>
<dbReference type="PhylomeDB" id="Q9D806"/>
<dbReference type="TreeFam" id="TF332950"/>
<dbReference type="BioGRID-ORCS" id="69137">
    <property type="hits" value="2 hits in 77 CRISPR screens"/>
</dbReference>
<dbReference type="ChiTaRS" id="Vstm5">
    <property type="organism name" value="mouse"/>
</dbReference>
<dbReference type="PRO" id="PR:Q9D806"/>
<dbReference type="Proteomes" id="UP000000589">
    <property type="component" value="Chromosome 9"/>
</dbReference>
<dbReference type="RNAct" id="Q9D806">
    <property type="molecule type" value="protein"/>
</dbReference>
<dbReference type="Bgee" id="ENSMUSG00000031937">
    <property type="expression patterns" value="Expressed in lumbar dorsal root ganglion and 138 other cell types or tissues"/>
</dbReference>
<dbReference type="GO" id="GO:0030424">
    <property type="term" value="C:axon"/>
    <property type="evidence" value="ECO:0000314"/>
    <property type="project" value="UniProtKB"/>
</dbReference>
<dbReference type="GO" id="GO:0030425">
    <property type="term" value="C:dendrite"/>
    <property type="evidence" value="ECO:0000314"/>
    <property type="project" value="UniProtKB"/>
</dbReference>
<dbReference type="GO" id="GO:0016020">
    <property type="term" value="C:membrane"/>
    <property type="evidence" value="ECO:0000314"/>
    <property type="project" value="UniProtKB"/>
</dbReference>
<dbReference type="GO" id="GO:0005886">
    <property type="term" value="C:plasma membrane"/>
    <property type="evidence" value="ECO:0000314"/>
    <property type="project" value="UniProtKB"/>
</dbReference>
<dbReference type="GO" id="GO:0046847">
    <property type="term" value="P:filopodium assembly"/>
    <property type="evidence" value="ECO:0000315"/>
    <property type="project" value="UniProtKB"/>
</dbReference>
<dbReference type="GO" id="GO:1904891">
    <property type="term" value="P:positive regulation of excitatory synapse assembly"/>
    <property type="evidence" value="ECO:0000315"/>
    <property type="project" value="UniProtKB"/>
</dbReference>
<dbReference type="GO" id="GO:0051260">
    <property type="term" value="P:protein homooligomerization"/>
    <property type="evidence" value="ECO:0000314"/>
    <property type="project" value="UniProtKB"/>
</dbReference>
<dbReference type="GO" id="GO:0021517">
    <property type="term" value="P:ventral spinal cord development"/>
    <property type="evidence" value="ECO:0000270"/>
    <property type="project" value="UniProtKB"/>
</dbReference>
<dbReference type="Gene3D" id="2.60.40.10">
    <property type="entry name" value="Immunoglobulins"/>
    <property type="match status" value="1"/>
</dbReference>
<dbReference type="InterPro" id="IPR015631">
    <property type="entry name" value="CD2/SLAM_rcpt"/>
</dbReference>
<dbReference type="InterPro" id="IPR036179">
    <property type="entry name" value="Ig-like_dom_sf"/>
</dbReference>
<dbReference type="InterPro" id="IPR013783">
    <property type="entry name" value="Ig-like_fold"/>
</dbReference>
<dbReference type="InterPro" id="IPR003599">
    <property type="entry name" value="Ig_sub"/>
</dbReference>
<dbReference type="InterPro" id="IPR013106">
    <property type="entry name" value="Ig_V-set"/>
</dbReference>
<dbReference type="PANTHER" id="PTHR12080">
    <property type="entry name" value="SIGNALING LYMPHOCYTIC ACTIVATION MOLECULE"/>
    <property type="match status" value="1"/>
</dbReference>
<dbReference type="PANTHER" id="PTHR12080:SF93">
    <property type="entry name" value="V-SET AND TRANSMEMBRANE DOMAIN-CONTAINING PROTEIN 5"/>
    <property type="match status" value="1"/>
</dbReference>
<dbReference type="Pfam" id="PF07686">
    <property type="entry name" value="V-set"/>
    <property type="match status" value="1"/>
</dbReference>
<dbReference type="SMART" id="SM00409">
    <property type="entry name" value="IG"/>
    <property type="match status" value="1"/>
</dbReference>
<dbReference type="SUPFAM" id="SSF48726">
    <property type="entry name" value="Immunoglobulin"/>
    <property type="match status" value="1"/>
</dbReference>
<protein>
    <recommendedName>
        <fullName evidence="5">V-set and transmembrane domain-containing protein 5</fullName>
    </recommendedName>
</protein>
<accession>Q9D806</accession>
<keyword id="KW-1003">Cell membrane</keyword>
<keyword id="KW-0966">Cell projection</keyword>
<keyword id="KW-0217">Developmental protein</keyword>
<keyword id="KW-0325">Glycoprotein</keyword>
<keyword id="KW-0472">Membrane</keyword>
<keyword id="KW-1185">Reference proteome</keyword>
<keyword id="KW-0732">Signal</keyword>
<keyword id="KW-0812">Transmembrane</keyword>
<keyword id="KW-1133">Transmembrane helix</keyword>
<feature type="signal peptide" evidence="1">
    <location>
        <begin position="1"/>
        <end position="27"/>
    </location>
</feature>
<feature type="chain" id="PRO_0000340694" description="V-set and transmembrane domain-containing protein 5">
    <location>
        <begin position="28"/>
        <end position="199"/>
    </location>
</feature>
<feature type="topological domain" description="Extracellular" evidence="1">
    <location>
        <begin position="28"/>
        <end position="146"/>
    </location>
</feature>
<feature type="transmembrane region" description="Helical" evidence="1">
    <location>
        <begin position="147"/>
        <end position="167"/>
    </location>
</feature>
<feature type="topological domain" description="Cytoplasmic" evidence="1">
    <location>
        <begin position="168"/>
        <end position="199"/>
    </location>
</feature>
<feature type="domain" description="Ig-like C2-type">
    <location>
        <begin position="35"/>
        <end position="138"/>
    </location>
</feature>
<feature type="region of interest" description="Important for CDC42-dependent filopodia induction" evidence="3">
    <location>
        <begin position="169"/>
        <end position="185"/>
    </location>
</feature>
<feature type="glycosylation site" description="N-linked (GlcNAc...) asparagine" evidence="1">
    <location>
        <position position="43"/>
    </location>
</feature>
<feature type="glycosylation site" description="N-linked (GlcNAc...) asparagine" evidence="1">
    <location>
        <position position="87"/>
    </location>
</feature>
<feature type="glycosylation site" description="N-linked (GlcNAc...) asparagine" evidence="1">
    <location>
        <position position="101"/>
    </location>
</feature>
<proteinExistence type="evidence at protein level"/>
<reference key="1">
    <citation type="journal article" date="2005" name="Science">
        <title>The transcriptional landscape of the mammalian genome.</title>
        <authorList>
            <person name="Carninci P."/>
            <person name="Kasukawa T."/>
            <person name="Katayama S."/>
            <person name="Gough J."/>
            <person name="Frith M.C."/>
            <person name="Maeda N."/>
            <person name="Oyama R."/>
            <person name="Ravasi T."/>
            <person name="Lenhard B."/>
            <person name="Wells C."/>
            <person name="Kodzius R."/>
            <person name="Shimokawa K."/>
            <person name="Bajic V.B."/>
            <person name="Brenner S.E."/>
            <person name="Batalov S."/>
            <person name="Forrest A.R."/>
            <person name="Zavolan M."/>
            <person name="Davis M.J."/>
            <person name="Wilming L.G."/>
            <person name="Aidinis V."/>
            <person name="Allen J.E."/>
            <person name="Ambesi-Impiombato A."/>
            <person name="Apweiler R."/>
            <person name="Aturaliya R.N."/>
            <person name="Bailey T.L."/>
            <person name="Bansal M."/>
            <person name="Baxter L."/>
            <person name="Beisel K.W."/>
            <person name="Bersano T."/>
            <person name="Bono H."/>
            <person name="Chalk A.M."/>
            <person name="Chiu K.P."/>
            <person name="Choudhary V."/>
            <person name="Christoffels A."/>
            <person name="Clutterbuck D.R."/>
            <person name="Crowe M.L."/>
            <person name="Dalla E."/>
            <person name="Dalrymple B.P."/>
            <person name="de Bono B."/>
            <person name="Della Gatta G."/>
            <person name="di Bernardo D."/>
            <person name="Down T."/>
            <person name="Engstrom P."/>
            <person name="Fagiolini M."/>
            <person name="Faulkner G."/>
            <person name="Fletcher C.F."/>
            <person name="Fukushima T."/>
            <person name="Furuno M."/>
            <person name="Futaki S."/>
            <person name="Gariboldi M."/>
            <person name="Georgii-Hemming P."/>
            <person name="Gingeras T.R."/>
            <person name="Gojobori T."/>
            <person name="Green R.E."/>
            <person name="Gustincich S."/>
            <person name="Harbers M."/>
            <person name="Hayashi Y."/>
            <person name="Hensch T.K."/>
            <person name="Hirokawa N."/>
            <person name="Hill D."/>
            <person name="Huminiecki L."/>
            <person name="Iacono M."/>
            <person name="Ikeo K."/>
            <person name="Iwama A."/>
            <person name="Ishikawa T."/>
            <person name="Jakt M."/>
            <person name="Kanapin A."/>
            <person name="Katoh M."/>
            <person name="Kawasawa Y."/>
            <person name="Kelso J."/>
            <person name="Kitamura H."/>
            <person name="Kitano H."/>
            <person name="Kollias G."/>
            <person name="Krishnan S.P."/>
            <person name="Kruger A."/>
            <person name="Kummerfeld S.K."/>
            <person name="Kurochkin I.V."/>
            <person name="Lareau L.F."/>
            <person name="Lazarevic D."/>
            <person name="Lipovich L."/>
            <person name="Liu J."/>
            <person name="Liuni S."/>
            <person name="McWilliam S."/>
            <person name="Madan Babu M."/>
            <person name="Madera M."/>
            <person name="Marchionni L."/>
            <person name="Matsuda H."/>
            <person name="Matsuzawa S."/>
            <person name="Miki H."/>
            <person name="Mignone F."/>
            <person name="Miyake S."/>
            <person name="Morris K."/>
            <person name="Mottagui-Tabar S."/>
            <person name="Mulder N."/>
            <person name="Nakano N."/>
            <person name="Nakauchi H."/>
            <person name="Ng P."/>
            <person name="Nilsson R."/>
            <person name="Nishiguchi S."/>
            <person name="Nishikawa S."/>
            <person name="Nori F."/>
            <person name="Ohara O."/>
            <person name="Okazaki Y."/>
            <person name="Orlando V."/>
            <person name="Pang K.C."/>
            <person name="Pavan W.J."/>
            <person name="Pavesi G."/>
            <person name="Pesole G."/>
            <person name="Petrovsky N."/>
            <person name="Piazza S."/>
            <person name="Reed J."/>
            <person name="Reid J.F."/>
            <person name="Ring B.Z."/>
            <person name="Ringwald M."/>
            <person name="Rost B."/>
            <person name="Ruan Y."/>
            <person name="Salzberg S.L."/>
            <person name="Sandelin A."/>
            <person name="Schneider C."/>
            <person name="Schoenbach C."/>
            <person name="Sekiguchi K."/>
            <person name="Semple C.A."/>
            <person name="Seno S."/>
            <person name="Sessa L."/>
            <person name="Sheng Y."/>
            <person name="Shibata Y."/>
            <person name="Shimada H."/>
            <person name="Shimada K."/>
            <person name="Silva D."/>
            <person name="Sinclair B."/>
            <person name="Sperling S."/>
            <person name="Stupka E."/>
            <person name="Sugiura K."/>
            <person name="Sultana R."/>
            <person name="Takenaka Y."/>
            <person name="Taki K."/>
            <person name="Tammoja K."/>
            <person name="Tan S.L."/>
            <person name="Tang S."/>
            <person name="Taylor M.S."/>
            <person name="Tegner J."/>
            <person name="Teichmann S.A."/>
            <person name="Ueda H.R."/>
            <person name="van Nimwegen E."/>
            <person name="Verardo R."/>
            <person name="Wei C.L."/>
            <person name="Yagi K."/>
            <person name="Yamanishi H."/>
            <person name="Zabarovsky E."/>
            <person name="Zhu S."/>
            <person name="Zimmer A."/>
            <person name="Hide W."/>
            <person name="Bult C."/>
            <person name="Grimmond S.M."/>
            <person name="Teasdale R.D."/>
            <person name="Liu E.T."/>
            <person name="Brusic V."/>
            <person name="Quackenbush J."/>
            <person name="Wahlestedt C."/>
            <person name="Mattick J.S."/>
            <person name="Hume D.A."/>
            <person name="Kai C."/>
            <person name="Sasaki D."/>
            <person name="Tomaru Y."/>
            <person name="Fukuda S."/>
            <person name="Kanamori-Katayama M."/>
            <person name="Suzuki M."/>
            <person name="Aoki J."/>
            <person name="Arakawa T."/>
            <person name="Iida J."/>
            <person name="Imamura K."/>
            <person name="Itoh M."/>
            <person name="Kato T."/>
            <person name="Kawaji H."/>
            <person name="Kawagashira N."/>
            <person name="Kawashima T."/>
            <person name="Kojima M."/>
            <person name="Kondo S."/>
            <person name="Konno H."/>
            <person name="Nakano K."/>
            <person name="Ninomiya N."/>
            <person name="Nishio T."/>
            <person name="Okada M."/>
            <person name="Plessy C."/>
            <person name="Shibata K."/>
            <person name="Shiraki T."/>
            <person name="Suzuki S."/>
            <person name="Tagami M."/>
            <person name="Waki K."/>
            <person name="Watahiki A."/>
            <person name="Okamura-Oho Y."/>
            <person name="Suzuki H."/>
            <person name="Kawai J."/>
            <person name="Hayashizaki Y."/>
        </authorList>
    </citation>
    <scope>NUCLEOTIDE SEQUENCE [LARGE SCALE MRNA]</scope>
    <source>
        <strain>C57BL/6J</strain>
        <tissue>Stomach</tissue>
    </source>
</reference>
<reference key="2">
    <citation type="journal article" date="2004" name="Genome Res.">
        <title>The status, quality, and expansion of the NIH full-length cDNA project: the Mammalian Gene Collection (MGC).</title>
        <authorList>
            <consortium name="The MGC Project Team"/>
        </authorList>
    </citation>
    <scope>NUCLEOTIDE SEQUENCE [LARGE SCALE MRNA]</scope>
    <source>
        <strain>C57BL/6J</strain>
        <tissue>Brain</tissue>
    </source>
</reference>
<reference key="3">
    <citation type="journal article" date="2015" name="PLoS ONE">
        <title>Expression of the immunoglobulin superfamily cell adhesion molecules in the developing spinal cord and dorsal root ganglion.</title>
        <authorList>
            <person name="Gu Z."/>
            <person name="Imai F."/>
            <person name="Kim I.J."/>
            <person name="Fujita H."/>
            <person name="Katayama K."/>
            <person name="Mori K."/>
            <person name="Yoshihara Y."/>
            <person name="Yoshida Y."/>
        </authorList>
    </citation>
    <scope>DEVELOPMENTAL STAGE</scope>
</reference>
<reference key="4">
    <citation type="journal article" date="2016" name="J. Neurosci.">
        <title>Putative cell adhesion membrane protein Vstm5 regulates neuronal morphology and migration in the central nervous system.</title>
        <authorList>
            <person name="Lee A.R."/>
            <person name="Ko K.W."/>
            <person name="Lee H."/>
            <person name="Yoon Y.S."/>
            <person name="Song M.R."/>
            <person name="Park C.S."/>
        </authorList>
    </citation>
    <scope>FUNCTION</scope>
    <scope>SUBUNIT</scope>
    <scope>SUBCELLULAR LOCATION</scope>
    <scope>TISSUE SPECIFICITY</scope>
    <scope>DEVELOPMENTAL STAGE</scope>
    <scope>GLYCOSYLATION</scope>
    <scope>DISRUPTION PHENOTYPE</scope>
    <scope>REGION</scope>
    <scope>PHYLOGENETIC ANALYSIS</scope>
</reference>
<name>VSTM5_MOUSE</name>
<comment type="function">
    <text evidence="3">Cell adhesion-like membrane protein of the central nervous system (CNS) which modulates both the position and complexity of central neurons by altering their membrane morphology and dynamics. Involved in the formation of neuronal dendrites and protrusions including dendritic filopodia. In synaptogenesis, regulates synapse formation by altering dendritic spine morphology and actin distribution. Promotes formation of unstable neuronal spines such as thin and branched types. Regulates neuronal morphogenesis and migration during cortical development in the brain.</text>
</comment>
<comment type="subunit">
    <text evidence="3">Can homooligomerize through cis interactions within the same cell membrane.</text>
</comment>
<comment type="subcellular location">
    <subcellularLocation>
        <location evidence="3">Cell membrane</location>
        <topology evidence="6">Single-pass type I membrane protein</topology>
    </subcellularLocation>
    <subcellularLocation>
        <location evidence="3">Cell projection</location>
        <location evidence="3">Dendrite</location>
    </subcellularLocation>
    <subcellularLocation>
        <location evidence="3">Cell projection</location>
        <location evidence="3">Axon</location>
    </subcellularLocation>
</comment>
<comment type="tissue specificity">
    <text evidence="3">Highly expressed in the central nervous system (CNS), with the highest expression in thalamus, hippocampus, cerebrum, midbrain and spinal cord. Also highly expressed in stomach, kidney and small intestine.</text>
</comment>
<comment type="developmental stage">
    <text evidence="2 3">Expressed in the ventral spinal cord, with strong expression in a subset of motor neurons, and in a subset of sensory neurons at embryonic day (E) 15.5 (PubMed:25826454). In the developing brain, expressed at low levels on 11 dpc, rapidly increasing to peak at postnatal day (P) 1, a period corresponding to the early stage of postmitotic neuronal differentiation when neuronal morphogenesis or synapse formation occurs, and then gradually decreasing (PubMed:27683913).</text>
</comment>
<comment type="PTM">
    <text evidence="3">N-glycosylated.</text>
</comment>
<comment type="disruption phenotype">
    <text evidence="3">RNAi-mediated knockdown mice have significantly lower density of dendritic filopodia and dendritic spines in embryonic hippocampal neurons. Lower density of excitatory synapses and significantly decreased dendritic spine to shaft ratio of F-actin in the later stages of neuron development. Aberrant neuronal migration in the cerebral cortex of developing mouse embryo. Neurons settle in the marginal zone (MZ) closer to the pial side and the corresponding percentage of neurons is decreased in the dense cortical plate (dCP), reflecting the overmigration of those neurons. Neurons in the upper cortical plate (UCP) result in a small but significant reduction in both the number of dendrites and average dendrite length. Neurons of embryonic brains show much lower levels of spines with the density of mushroom spines markedly decreased.</text>
</comment>
<gene>
    <name evidence="4 5" type="primary">Vstm5</name>
</gene>
<organism>
    <name type="scientific">Mus musculus</name>
    <name type="common">Mouse</name>
    <dbReference type="NCBI Taxonomy" id="10090"/>
    <lineage>
        <taxon>Eukaryota</taxon>
        <taxon>Metazoa</taxon>
        <taxon>Chordata</taxon>
        <taxon>Craniata</taxon>
        <taxon>Vertebrata</taxon>
        <taxon>Euteleostomi</taxon>
        <taxon>Mammalia</taxon>
        <taxon>Eutheria</taxon>
        <taxon>Euarchontoglires</taxon>
        <taxon>Glires</taxon>
        <taxon>Rodentia</taxon>
        <taxon>Myomorpha</taxon>
        <taxon>Muroidea</taxon>
        <taxon>Muridae</taxon>
        <taxon>Murinae</taxon>
        <taxon>Mus</taxon>
        <taxon>Mus</taxon>
    </lineage>
</organism>
<evidence type="ECO:0000255" key="1"/>
<evidence type="ECO:0000269" key="2">
    <source>
    </source>
</evidence>
<evidence type="ECO:0000269" key="3">
    <source>
    </source>
</evidence>
<evidence type="ECO:0000303" key="4">
    <source>
    </source>
</evidence>
<evidence type="ECO:0000303" key="5">
    <source>
    </source>
</evidence>
<evidence type="ECO:0000305" key="6"/>